<evidence type="ECO:0000250" key="1"/>
<evidence type="ECO:0000255" key="2">
    <source>
        <dbReference type="PROSITE-ProRule" id="PRU00238"/>
    </source>
</evidence>
<evidence type="ECO:0000269" key="3">
    <source>
    </source>
</evidence>
<evidence type="ECO:0000269" key="4">
    <source>
    </source>
</evidence>
<evidence type="ECO:0000269" key="5">
    <source>
    </source>
</evidence>
<evidence type="ECO:0000305" key="6"/>
<evidence type="ECO:0007829" key="7">
    <source>
        <dbReference type="PDB" id="1X9F"/>
    </source>
</evidence>
<evidence type="ECO:0007829" key="8">
    <source>
        <dbReference type="PDB" id="2GTL"/>
    </source>
</evidence>
<accession>P11069</accession>
<keyword id="KW-0002">3D-structure</keyword>
<keyword id="KW-0903">Direct protein sequencing</keyword>
<keyword id="KW-1015">Disulfide bond</keyword>
<keyword id="KW-0349">Heme</keyword>
<keyword id="KW-0408">Iron</keyword>
<keyword id="KW-0479">Metal-binding</keyword>
<keyword id="KW-0561">Oxygen transport</keyword>
<keyword id="KW-0964">Secreted</keyword>
<keyword id="KW-0732">Signal</keyword>
<keyword id="KW-0813">Transport</keyword>
<comment type="subunit">
    <text evidence="3">The extracellular hemoglobin of the earthworm consists of 12 subunits that have a hexagonal bilayer structure with a molecular weight near 3.8 million. Each one-twelfth subunit is composed primarily of disulfide linked trimers (chains A, B, and C) and monomers (chain D).</text>
</comment>
<comment type="subcellular location">
    <subcellularLocation>
        <location>Secreted</location>
    </subcellularLocation>
</comment>
<comment type="similarity">
    <text evidence="2">Belongs to the globin family.</text>
</comment>
<organism>
    <name type="scientific">Lumbricus terrestris</name>
    <name type="common">Common earthworm</name>
    <dbReference type="NCBI Taxonomy" id="6398"/>
    <lineage>
        <taxon>Eukaryota</taxon>
        <taxon>Metazoa</taxon>
        <taxon>Spiralia</taxon>
        <taxon>Lophotrochozoa</taxon>
        <taxon>Annelida</taxon>
        <taxon>Clitellata</taxon>
        <taxon>Oligochaeta</taxon>
        <taxon>Crassiclitellata</taxon>
        <taxon>Lumbricina</taxon>
        <taxon>Lumbricidae</taxon>
        <taxon>Lumbricinae</taxon>
        <taxon>Lumbricus</taxon>
    </lineage>
</organism>
<feature type="signal peptide" evidence="4 5">
    <location>
        <begin position="1"/>
        <end position="17"/>
    </location>
</feature>
<feature type="chain" id="PRO_0000011213" description="Extracellular globin-3">
    <location>
        <begin position="18"/>
        <end position="170"/>
    </location>
</feature>
<feature type="domain" description="Globin" evidence="2">
    <location>
        <begin position="23"/>
        <end position="169"/>
    </location>
</feature>
<feature type="binding site" description="proximal binding residue">
    <location>
        <position position="119"/>
    </location>
    <ligand>
        <name>heme b</name>
        <dbReference type="ChEBI" id="CHEBI:60344"/>
    </ligand>
    <ligandPart>
        <name>Fe</name>
        <dbReference type="ChEBI" id="CHEBI:18248"/>
    </ligandPart>
</feature>
<feature type="disulfide bond" description="Interchain (with chain IV)" evidence="1">
    <location>
        <position position="23"/>
    </location>
</feature>
<feature type="disulfide bond" evidence="1">
    <location>
        <begin position="24"/>
        <end position="156"/>
    </location>
</feature>
<feature type="sequence conflict" description="In Ref. 2." evidence="6" ref="2">
    <original>A</original>
    <variation>T</variation>
    <location>
        <position position="17"/>
    </location>
</feature>
<feature type="strand" evidence="8">
    <location>
        <begin position="22"/>
        <end position="24"/>
    </location>
</feature>
<feature type="helix" evidence="7">
    <location>
        <begin position="26"/>
        <end position="37"/>
    </location>
</feature>
<feature type="helix" evidence="7">
    <location>
        <begin position="38"/>
        <end position="40"/>
    </location>
</feature>
<feature type="strand" evidence="7">
    <location>
        <begin position="41"/>
        <end position="43"/>
    </location>
</feature>
<feature type="helix" evidence="7">
    <location>
        <begin position="45"/>
        <end position="63"/>
    </location>
</feature>
<feature type="helix" evidence="7">
    <location>
        <begin position="67"/>
        <end position="70"/>
    </location>
</feature>
<feature type="helix" evidence="7">
    <location>
        <begin position="72"/>
        <end position="74"/>
    </location>
</feature>
<feature type="helix" evidence="7">
    <location>
        <begin position="76"/>
        <end position="78"/>
    </location>
</feature>
<feature type="helix" evidence="7">
    <location>
        <begin position="82"/>
        <end position="100"/>
    </location>
</feature>
<feature type="turn" evidence="7">
    <location>
        <begin position="101"/>
        <end position="103"/>
    </location>
</feature>
<feature type="helix" evidence="7">
    <location>
        <begin position="105"/>
        <end position="120"/>
    </location>
</feature>
<feature type="helix" evidence="7">
    <location>
        <begin position="127"/>
        <end position="144"/>
    </location>
</feature>
<feature type="helix" evidence="7">
    <location>
        <begin position="150"/>
        <end position="165"/>
    </location>
</feature>
<protein>
    <recommendedName>
        <fullName>Extracellular globin-3</fullName>
    </recommendedName>
    <alternativeName>
        <fullName>Erythrocruorin</fullName>
    </alternativeName>
    <alternativeName>
        <fullName>Extracellular globin III</fullName>
    </alternativeName>
    <alternativeName>
        <fullName>Globin C</fullName>
    </alternativeName>
</protein>
<sequence length="170" mass="19082">MLRQLLVLVGLAVVCLADEHEHCCSEEDHRIVQKQWDILWRDTESSKIKIGFGRLLLTKLAKDIPDVNDLFKRVDIEHAEGPKFSAHALRILNGLDLAINLLDDPPALDAALDHLAHQHEVREGVQKAHFKKFGEILATGLPQVLDDYDALAWKSCLKGILTKISSRLNA</sequence>
<reference key="1">
    <citation type="journal article" date="1989" name="J. Biol. Chem.">
        <title>The structure of the gene encoding chain c of the hemoglobin of the earthworm, Lumbricus terrestris.</title>
        <authorList>
            <person name="Jhiang S.M."/>
            <person name="Riggs A.F."/>
        </authorList>
    </citation>
    <scope>NUCLEOTIDE SEQUENCE [GENOMIC DNA]</scope>
</reference>
<reference key="2">
    <citation type="journal article" date="1988" name="Science">
        <title>Exon-intron organization in genes of earthworm and vertebrate globins.</title>
        <authorList>
            <person name="Jhiang S.M."/>
            <person name="Garey J.R."/>
            <person name="Riggs A.F."/>
        </authorList>
    </citation>
    <scope>NUCLEOTIDE SEQUENCE</scope>
</reference>
<reference key="3">
    <citation type="journal article" date="1988" name="J. Biol. Chem.">
        <title>The amino acid sequences of chains a, b, and c that form the trimer subunit of the extracellular hemoglobin from Lumbricus terrestris.</title>
        <authorList>
            <person name="Fushitani K."/>
            <person name="Matsuura M.S.A."/>
            <person name="Riggs A.F."/>
        </authorList>
    </citation>
    <scope>PROTEIN SEQUENCE OF 18-170</scope>
</reference>
<reference key="4">
    <citation type="journal article" date="1987" name="Biochem. J.">
        <title>Two globin strains in the giant annelid extracellular haemoglobins.</title>
        <authorList>
            <person name="Gotoh T."/>
            <person name="Shishikura F."/>
            <person name="Snow J.W."/>
            <person name="Ereifej K.I."/>
            <person name="Vinogradov S.N."/>
            <person name="Walz D.A."/>
        </authorList>
    </citation>
    <scope>PROTEIN SEQUENCE OF 18-39</scope>
</reference>
<reference key="5">
    <citation type="journal article" date="2004" name="J. Mol. Biol.">
        <title>Crystal structure of the hemoglobin dodecamer from Lumbricus erythrocruorin: allosteric core of giant annelid respiratory complexes.</title>
        <authorList>
            <person name="Strand K."/>
            <person name="Knapp J.E."/>
            <person name="Bhyravbhatla B."/>
            <person name="Royer W.E. Jr."/>
        </authorList>
    </citation>
    <scope>X-RAY CRYSTALLOGRAPHY (2.60 ANGSTROMS) OF 18-170 IN COMPLEX WITH HEME</scope>
    <scope>SUBUNIT</scope>
</reference>
<name>GLB3_LUMTE</name>
<proteinExistence type="evidence at protein level"/>
<dbReference type="EMBL" id="J03082">
    <property type="protein sequence ID" value="AAA75013.1"/>
    <property type="molecule type" value="mRNA"/>
</dbReference>
<dbReference type="EMBL" id="J05161">
    <property type="protein sequence ID" value="AAA98622.1"/>
    <property type="molecule type" value="Genomic_DNA"/>
</dbReference>
<dbReference type="PIR" id="A28563">
    <property type="entry name" value="A28563"/>
</dbReference>
<dbReference type="PIR" id="A34433">
    <property type="entry name" value="A34433"/>
</dbReference>
<dbReference type="PIR" id="C28151">
    <property type="entry name" value="C28151"/>
</dbReference>
<dbReference type="PDB" id="1X9F">
    <property type="method" value="X-ray"/>
    <property type="resolution" value="2.60 A"/>
    <property type="chains" value="C/G/K=18-170"/>
</dbReference>
<dbReference type="PDB" id="2GTL">
    <property type="method" value="X-ray"/>
    <property type="resolution" value="3.50 A"/>
    <property type="chains" value="C/G/K=18-170"/>
</dbReference>
<dbReference type="PDB" id="4V93">
    <property type="method" value="EM"/>
    <property type="resolution" value="8.10 A"/>
    <property type="chains" value="A0/A5/AC/AH/AM/AR/AW/Ab/Ag/Al/Aq/Av=20-168, B4/BB/BG/BL/BQ/BV/Ba/Bf/Bk/Bp/Bu/Bz/C3/CA/CF/CK/CP/CU/CZ/Ce/Cj/Co/Ct/Cy=1-170"/>
</dbReference>
<dbReference type="PDB" id="5M3L">
    <property type="method" value="EM"/>
    <property type="resolution" value="3.80 A"/>
    <property type="chains" value="C/G/K=18-170"/>
</dbReference>
<dbReference type="PDBsum" id="1X9F"/>
<dbReference type="PDBsum" id="2GTL"/>
<dbReference type="PDBsum" id="4V93"/>
<dbReference type="PDBsum" id="5M3L"/>
<dbReference type="SMR" id="P11069"/>
<dbReference type="DIP" id="DIP-29124N"/>
<dbReference type="IntAct" id="P11069">
    <property type="interactions" value="1"/>
</dbReference>
<dbReference type="EvolutionaryTrace" id="P11069"/>
<dbReference type="GO" id="GO:0005576">
    <property type="term" value="C:extracellular region"/>
    <property type="evidence" value="ECO:0007669"/>
    <property type="project" value="UniProtKB-SubCell"/>
</dbReference>
<dbReference type="GO" id="GO:0005833">
    <property type="term" value="C:hemoglobin complex"/>
    <property type="evidence" value="ECO:0007669"/>
    <property type="project" value="InterPro"/>
</dbReference>
<dbReference type="GO" id="GO:0020037">
    <property type="term" value="F:heme binding"/>
    <property type="evidence" value="ECO:0007669"/>
    <property type="project" value="InterPro"/>
</dbReference>
<dbReference type="GO" id="GO:0005506">
    <property type="term" value="F:iron ion binding"/>
    <property type="evidence" value="ECO:0007669"/>
    <property type="project" value="InterPro"/>
</dbReference>
<dbReference type="GO" id="GO:0019825">
    <property type="term" value="F:oxygen binding"/>
    <property type="evidence" value="ECO:0007669"/>
    <property type="project" value="InterPro"/>
</dbReference>
<dbReference type="GO" id="GO:0005344">
    <property type="term" value="F:oxygen carrier activity"/>
    <property type="evidence" value="ECO:0007669"/>
    <property type="project" value="UniProtKB-KW"/>
</dbReference>
<dbReference type="CDD" id="cd01040">
    <property type="entry name" value="Mb-like"/>
    <property type="match status" value="1"/>
</dbReference>
<dbReference type="Gene3D" id="1.10.490.10">
    <property type="entry name" value="Globins"/>
    <property type="match status" value="1"/>
</dbReference>
<dbReference type="InterPro" id="IPR000971">
    <property type="entry name" value="Globin"/>
</dbReference>
<dbReference type="InterPro" id="IPR009050">
    <property type="entry name" value="Globin-like_sf"/>
</dbReference>
<dbReference type="InterPro" id="IPR012292">
    <property type="entry name" value="Globin/Proto"/>
</dbReference>
<dbReference type="InterPro" id="IPR014610">
    <property type="entry name" value="Haemoglobin_extracell"/>
</dbReference>
<dbReference type="InterPro" id="IPR044399">
    <property type="entry name" value="Mb-like_M"/>
</dbReference>
<dbReference type="PANTHER" id="PTHR47217">
    <property type="entry name" value="GLOBIN-LIKE PROTEIN"/>
    <property type="match status" value="1"/>
</dbReference>
<dbReference type="PANTHER" id="PTHR47217:SF1">
    <property type="entry name" value="GLOBIN-LIKE PROTEIN"/>
    <property type="match status" value="1"/>
</dbReference>
<dbReference type="Pfam" id="PF00042">
    <property type="entry name" value="Globin"/>
    <property type="match status" value="1"/>
</dbReference>
<dbReference type="PIRSF" id="PIRSF036517">
    <property type="entry name" value="Ext_hemo"/>
    <property type="match status" value="1"/>
</dbReference>
<dbReference type="SUPFAM" id="SSF46458">
    <property type="entry name" value="Globin-like"/>
    <property type="match status" value="1"/>
</dbReference>
<dbReference type="PROSITE" id="PS01033">
    <property type="entry name" value="GLOBIN"/>
    <property type="match status" value="1"/>
</dbReference>